<organism>
    <name type="scientific">Parasynechococcus marenigrum (strain WH8102)</name>
    <dbReference type="NCBI Taxonomy" id="84588"/>
    <lineage>
        <taxon>Bacteria</taxon>
        <taxon>Bacillati</taxon>
        <taxon>Cyanobacteriota</taxon>
        <taxon>Cyanophyceae</taxon>
        <taxon>Synechococcales</taxon>
        <taxon>Prochlorococcaceae</taxon>
        <taxon>Parasynechococcus</taxon>
        <taxon>Parasynechococcus marenigrum</taxon>
    </lineage>
</organism>
<keyword id="KW-0414">Isoprene biosynthesis</keyword>
<keyword id="KW-0460">Magnesium</keyword>
<keyword id="KW-0479">Metal-binding</keyword>
<keyword id="KW-0784">Thiamine biosynthesis</keyword>
<keyword id="KW-0786">Thiamine pyrophosphate</keyword>
<keyword id="KW-0808">Transferase</keyword>
<name>DXS_PARMW</name>
<comment type="function">
    <text evidence="1">Catalyzes the acyloin condensation reaction between C atoms 2 and 3 of pyruvate and glyceraldehyde 3-phosphate to yield 1-deoxy-D-xylulose-5-phosphate (DXP).</text>
</comment>
<comment type="catalytic activity">
    <reaction evidence="1">
        <text>D-glyceraldehyde 3-phosphate + pyruvate + H(+) = 1-deoxy-D-xylulose 5-phosphate + CO2</text>
        <dbReference type="Rhea" id="RHEA:12605"/>
        <dbReference type="ChEBI" id="CHEBI:15361"/>
        <dbReference type="ChEBI" id="CHEBI:15378"/>
        <dbReference type="ChEBI" id="CHEBI:16526"/>
        <dbReference type="ChEBI" id="CHEBI:57792"/>
        <dbReference type="ChEBI" id="CHEBI:59776"/>
        <dbReference type="EC" id="2.2.1.7"/>
    </reaction>
</comment>
<comment type="cofactor">
    <cofactor evidence="1">
        <name>Mg(2+)</name>
        <dbReference type="ChEBI" id="CHEBI:18420"/>
    </cofactor>
    <text evidence="1">Binds 1 Mg(2+) ion per subunit.</text>
</comment>
<comment type="cofactor">
    <cofactor evidence="1">
        <name>thiamine diphosphate</name>
        <dbReference type="ChEBI" id="CHEBI:58937"/>
    </cofactor>
    <text evidence="1">Binds 1 thiamine pyrophosphate per subunit.</text>
</comment>
<comment type="pathway">
    <text evidence="1">Metabolic intermediate biosynthesis; 1-deoxy-D-xylulose 5-phosphate biosynthesis; 1-deoxy-D-xylulose 5-phosphate from D-glyceraldehyde 3-phosphate and pyruvate: step 1/1.</text>
</comment>
<comment type="subunit">
    <text evidence="1">Homodimer.</text>
</comment>
<comment type="similarity">
    <text evidence="1">Belongs to the transketolase family. DXPS subfamily.</text>
</comment>
<sequence>MHLGDLTHPNELHGLKLSELEDVARQIRDRHLQVVSTSGGHLGPGLGVVELTLALYQTLDLDRDRVIWDVGHQAYPHKLITGRFNDFHTLRQQNGVAGYLKRSESNFDHFGAGHASTSISAALGMAMARDNRGEDFKCVAVIGDGALTGGMALEAINHAGHLPETPLLVVLNDNDMSISPPVGALSNVLNRARLSPPMQFLSGSVEESVRHLPFMGGELPAELNRLKGSMRRLAVPKVGAVFEELGFTYMGPIDGHDIGEMMRTFQAAHRDGGPVLVHVVTKKGKGYPYAEADQVGYHAQSAFDLTTGKAIPSKKPKPASYSKVFGQTLVKLCEQNSRVVGITAAMATGTGLDLLQKAVPNQYVDVGIAEQHAVTLAAGMACEGLRPVVAIYSTFLQRAYDQLIHDVGIQNLPVTFVLDRAGIVGADGPTHQGQYDISYMRSIPNFTVMAPKDEAELQRMLVTCLNHDGPTALRIPRGSGVGMPLMEEGWEALPIGRGELLREGDDLLIVAYGSMVHPALDTATLLEEAGLSTTVINARFLRPLDQALIHPLARRIRRVVTMEEGALAGGFGAAVLESLSDQDISIPLLRIGIPDKMVDHATPQQSKESLEMIPVQMAERIRRRFDLGGRDFAGAASVPAIQS</sequence>
<evidence type="ECO:0000255" key="1">
    <source>
        <dbReference type="HAMAP-Rule" id="MF_00315"/>
    </source>
</evidence>
<feature type="chain" id="PRO_0000189162" description="1-deoxy-D-xylulose-5-phosphate synthase">
    <location>
        <begin position="1"/>
        <end position="643"/>
    </location>
</feature>
<feature type="binding site" evidence="1">
    <location>
        <position position="72"/>
    </location>
    <ligand>
        <name>thiamine diphosphate</name>
        <dbReference type="ChEBI" id="CHEBI:58937"/>
    </ligand>
</feature>
<feature type="binding site" evidence="1">
    <location>
        <begin position="113"/>
        <end position="115"/>
    </location>
    <ligand>
        <name>thiamine diphosphate</name>
        <dbReference type="ChEBI" id="CHEBI:58937"/>
    </ligand>
</feature>
<feature type="binding site" evidence="1">
    <location>
        <position position="144"/>
    </location>
    <ligand>
        <name>Mg(2+)</name>
        <dbReference type="ChEBI" id="CHEBI:18420"/>
    </ligand>
</feature>
<feature type="binding site" evidence="1">
    <location>
        <begin position="145"/>
        <end position="146"/>
    </location>
    <ligand>
        <name>thiamine diphosphate</name>
        <dbReference type="ChEBI" id="CHEBI:58937"/>
    </ligand>
</feature>
<feature type="binding site" evidence="1">
    <location>
        <position position="174"/>
    </location>
    <ligand>
        <name>Mg(2+)</name>
        <dbReference type="ChEBI" id="CHEBI:18420"/>
    </ligand>
</feature>
<feature type="binding site" evidence="1">
    <location>
        <position position="174"/>
    </location>
    <ligand>
        <name>thiamine diphosphate</name>
        <dbReference type="ChEBI" id="CHEBI:58937"/>
    </ligand>
</feature>
<feature type="binding site" evidence="1">
    <location>
        <position position="287"/>
    </location>
    <ligand>
        <name>thiamine diphosphate</name>
        <dbReference type="ChEBI" id="CHEBI:58937"/>
    </ligand>
</feature>
<feature type="binding site" evidence="1">
    <location>
        <position position="370"/>
    </location>
    <ligand>
        <name>thiamine diphosphate</name>
        <dbReference type="ChEBI" id="CHEBI:58937"/>
    </ligand>
</feature>
<dbReference type="EC" id="2.2.1.7" evidence="1"/>
<dbReference type="EMBL" id="BX569692">
    <property type="protein sequence ID" value="CAE07807.1"/>
    <property type="molecule type" value="Genomic_DNA"/>
</dbReference>
<dbReference type="RefSeq" id="WP_011128156.1">
    <property type="nucleotide sequence ID" value="NC_005070.1"/>
</dbReference>
<dbReference type="SMR" id="Q7U6P6"/>
<dbReference type="STRING" id="84588.SYNW1292"/>
<dbReference type="KEGG" id="syw:SYNW1292"/>
<dbReference type="eggNOG" id="COG1154">
    <property type="taxonomic scope" value="Bacteria"/>
</dbReference>
<dbReference type="HOGENOM" id="CLU_009227_1_4_3"/>
<dbReference type="UniPathway" id="UPA00064">
    <property type="reaction ID" value="UER00091"/>
</dbReference>
<dbReference type="Proteomes" id="UP000001422">
    <property type="component" value="Chromosome"/>
</dbReference>
<dbReference type="GO" id="GO:0005829">
    <property type="term" value="C:cytosol"/>
    <property type="evidence" value="ECO:0007669"/>
    <property type="project" value="TreeGrafter"/>
</dbReference>
<dbReference type="GO" id="GO:0008661">
    <property type="term" value="F:1-deoxy-D-xylulose-5-phosphate synthase activity"/>
    <property type="evidence" value="ECO:0007669"/>
    <property type="project" value="UniProtKB-UniRule"/>
</dbReference>
<dbReference type="GO" id="GO:0000287">
    <property type="term" value="F:magnesium ion binding"/>
    <property type="evidence" value="ECO:0007669"/>
    <property type="project" value="UniProtKB-UniRule"/>
</dbReference>
<dbReference type="GO" id="GO:0030976">
    <property type="term" value="F:thiamine pyrophosphate binding"/>
    <property type="evidence" value="ECO:0007669"/>
    <property type="project" value="UniProtKB-UniRule"/>
</dbReference>
<dbReference type="GO" id="GO:0052865">
    <property type="term" value="P:1-deoxy-D-xylulose 5-phosphate biosynthetic process"/>
    <property type="evidence" value="ECO:0007669"/>
    <property type="project" value="UniProtKB-UniPathway"/>
</dbReference>
<dbReference type="GO" id="GO:0019288">
    <property type="term" value="P:isopentenyl diphosphate biosynthetic process, methylerythritol 4-phosphate pathway"/>
    <property type="evidence" value="ECO:0007669"/>
    <property type="project" value="TreeGrafter"/>
</dbReference>
<dbReference type="GO" id="GO:0016114">
    <property type="term" value="P:terpenoid biosynthetic process"/>
    <property type="evidence" value="ECO:0007669"/>
    <property type="project" value="UniProtKB-UniRule"/>
</dbReference>
<dbReference type="GO" id="GO:0009228">
    <property type="term" value="P:thiamine biosynthetic process"/>
    <property type="evidence" value="ECO:0007669"/>
    <property type="project" value="UniProtKB-UniRule"/>
</dbReference>
<dbReference type="CDD" id="cd02007">
    <property type="entry name" value="TPP_DXS"/>
    <property type="match status" value="1"/>
</dbReference>
<dbReference type="CDD" id="cd07033">
    <property type="entry name" value="TPP_PYR_DXS_TK_like"/>
    <property type="match status" value="1"/>
</dbReference>
<dbReference type="FunFam" id="3.40.50.920:FF:000002">
    <property type="entry name" value="1-deoxy-D-xylulose-5-phosphate synthase"/>
    <property type="match status" value="1"/>
</dbReference>
<dbReference type="FunFam" id="3.40.50.970:FF:000005">
    <property type="entry name" value="1-deoxy-D-xylulose-5-phosphate synthase"/>
    <property type="match status" value="1"/>
</dbReference>
<dbReference type="Gene3D" id="3.40.50.920">
    <property type="match status" value="1"/>
</dbReference>
<dbReference type="Gene3D" id="3.40.50.970">
    <property type="match status" value="2"/>
</dbReference>
<dbReference type="HAMAP" id="MF_00315">
    <property type="entry name" value="DXP_synth"/>
    <property type="match status" value="1"/>
</dbReference>
<dbReference type="InterPro" id="IPR005477">
    <property type="entry name" value="Dxylulose-5-P_synthase"/>
</dbReference>
<dbReference type="InterPro" id="IPR029061">
    <property type="entry name" value="THDP-binding"/>
</dbReference>
<dbReference type="InterPro" id="IPR009014">
    <property type="entry name" value="Transketo_C/PFOR_II"/>
</dbReference>
<dbReference type="InterPro" id="IPR005475">
    <property type="entry name" value="Transketolase-like_Pyr-bd"/>
</dbReference>
<dbReference type="InterPro" id="IPR020826">
    <property type="entry name" value="Transketolase_BS"/>
</dbReference>
<dbReference type="InterPro" id="IPR033248">
    <property type="entry name" value="Transketolase_C"/>
</dbReference>
<dbReference type="InterPro" id="IPR049557">
    <property type="entry name" value="Transketolase_CS"/>
</dbReference>
<dbReference type="NCBIfam" id="TIGR00204">
    <property type="entry name" value="dxs"/>
    <property type="match status" value="1"/>
</dbReference>
<dbReference type="NCBIfam" id="NF003933">
    <property type="entry name" value="PRK05444.2-2"/>
    <property type="match status" value="1"/>
</dbReference>
<dbReference type="PANTHER" id="PTHR43322">
    <property type="entry name" value="1-D-DEOXYXYLULOSE 5-PHOSPHATE SYNTHASE-RELATED"/>
    <property type="match status" value="1"/>
</dbReference>
<dbReference type="PANTHER" id="PTHR43322:SF5">
    <property type="entry name" value="1-DEOXY-D-XYLULOSE-5-PHOSPHATE SYNTHASE, CHLOROPLASTIC"/>
    <property type="match status" value="1"/>
</dbReference>
<dbReference type="Pfam" id="PF13292">
    <property type="entry name" value="DXP_synthase_N"/>
    <property type="match status" value="1"/>
</dbReference>
<dbReference type="Pfam" id="PF02779">
    <property type="entry name" value="Transket_pyr"/>
    <property type="match status" value="1"/>
</dbReference>
<dbReference type="Pfam" id="PF02780">
    <property type="entry name" value="Transketolase_C"/>
    <property type="match status" value="1"/>
</dbReference>
<dbReference type="SMART" id="SM00861">
    <property type="entry name" value="Transket_pyr"/>
    <property type="match status" value="1"/>
</dbReference>
<dbReference type="SUPFAM" id="SSF52518">
    <property type="entry name" value="Thiamin diphosphate-binding fold (THDP-binding)"/>
    <property type="match status" value="2"/>
</dbReference>
<dbReference type="SUPFAM" id="SSF52922">
    <property type="entry name" value="TK C-terminal domain-like"/>
    <property type="match status" value="1"/>
</dbReference>
<dbReference type="PROSITE" id="PS00801">
    <property type="entry name" value="TRANSKETOLASE_1"/>
    <property type="match status" value="1"/>
</dbReference>
<dbReference type="PROSITE" id="PS00802">
    <property type="entry name" value="TRANSKETOLASE_2"/>
    <property type="match status" value="1"/>
</dbReference>
<protein>
    <recommendedName>
        <fullName evidence="1">1-deoxy-D-xylulose-5-phosphate synthase</fullName>
        <ecNumber evidence="1">2.2.1.7</ecNumber>
    </recommendedName>
    <alternativeName>
        <fullName evidence="1">1-deoxyxylulose-5-phosphate synthase</fullName>
        <shortName evidence="1">DXP synthase</shortName>
        <shortName evidence="1">DXPS</shortName>
    </alternativeName>
</protein>
<reference key="1">
    <citation type="journal article" date="2003" name="Nature">
        <title>The genome of a motile marine Synechococcus.</title>
        <authorList>
            <person name="Palenik B."/>
            <person name="Brahamsha B."/>
            <person name="Larimer F.W."/>
            <person name="Land M.L."/>
            <person name="Hauser L."/>
            <person name="Chain P."/>
            <person name="Lamerdin J.E."/>
            <person name="Regala W."/>
            <person name="Allen E.E."/>
            <person name="McCarren J."/>
            <person name="Paulsen I.T."/>
            <person name="Dufresne A."/>
            <person name="Partensky F."/>
            <person name="Webb E.A."/>
            <person name="Waterbury J."/>
        </authorList>
    </citation>
    <scope>NUCLEOTIDE SEQUENCE [LARGE SCALE GENOMIC DNA]</scope>
    <source>
        <strain>WH8102</strain>
    </source>
</reference>
<proteinExistence type="inferred from homology"/>
<gene>
    <name evidence="1" type="primary">dxs</name>
    <name type="ordered locus">SYNW1292</name>
</gene>
<accession>Q7U6P6</accession>